<feature type="chain" id="PRO_1000086006" description="Small ribosomal subunit protein uS5">
    <location>
        <begin position="1"/>
        <end position="167"/>
    </location>
</feature>
<feature type="domain" description="S5 DRBM" evidence="1">
    <location>
        <begin position="11"/>
        <end position="74"/>
    </location>
</feature>
<accession>Q0TCF8</accession>
<comment type="function">
    <text evidence="1">With S4 and S12 plays an important role in translational accuracy.</text>
</comment>
<comment type="function">
    <text evidence="1">Located at the back of the 30S subunit body where it stabilizes the conformation of the head with respect to the body.</text>
</comment>
<comment type="subunit">
    <text evidence="1">Part of the 30S ribosomal subunit. Contacts proteins S4 and S8.</text>
</comment>
<comment type="domain">
    <text>The N-terminal domain interacts with the head of the 30S subunit; the C-terminal domain interacts with the body and contacts protein S4. The interaction surface between S4 and S5 is involved in control of translational fidelity.</text>
</comment>
<comment type="similarity">
    <text evidence="1">Belongs to the universal ribosomal protein uS5 family.</text>
</comment>
<evidence type="ECO:0000255" key="1">
    <source>
        <dbReference type="HAMAP-Rule" id="MF_01307"/>
    </source>
</evidence>
<evidence type="ECO:0000305" key="2"/>
<organism>
    <name type="scientific">Escherichia coli O6:K15:H31 (strain 536 / UPEC)</name>
    <dbReference type="NCBI Taxonomy" id="362663"/>
    <lineage>
        <taxon>Bacteria</taxon>
        <taxon>Pseudomonadati</taxon>
        <taxon>Pseudomonadota</taxon>
        <taxon>Gammaproteobacteria</taxon>
        <taxon>Enterobacterales</taxon>
        <taxon>Enterobacteriaceae</taxon>
        <taxon>Escherichia</taxon>
    </lineage>
</organism>
<name>RS5_ECOL5</name>
<dbReference type="EMBL" id="CP000247">
    <property type="protein sequence ID" value="ABG71371.1"/>
    <property type="molecule type" value="Genomic_DNA"/>
</dbReference>
<dbReference type="RefSeq" id="WP_000940121.1">
    <property type="nucleotide sequence ID" value="NC_008253.1"/>
</dbReference>
<dbReference type="SMR" id="Q0TCF8"/>
<dbReference type="GeneID" id="93778684"/>
<dbReference type="KEGG" id="ecp:ECP_3391"/>
<dbReference type="HOGENOM" id="CLU_065898_2_2_6"/>
<dbReference type="Proteomes" id="UP000009182">
    <property type="component" value="Chromosome"/>
</dbReference>
<dbReference type="GO" id="GO:0015935">
    <property type="term" value="C:small ribosomal subunit"/>
    <property type="evidence" value="ECO:0007669"/>
    <property type="project" value="InterPro"/>
</dbReference>
<dbReference type="GO" id="GO:0019843">
    <property type="term" value="F:rRNA binding"/>
    <property type="evidence" value="ECO:0007669"/>
    <property type="project" value="UniProtKB-UniRule"/>
</dbReference>
<dbReference type="GO" id="GO:0003735">
    <property type="term" value="F:structural constituent of ribosome"/>
    <property type="evidence" value="ECO:0007669"/>
    <property type="project" value="InterPro"/>
</dbReference>
<dbReference type="GO" id="GO:0006412">
    <property type="term" value="P:translation"/>
    <property type="evidence" value="ECO:0007669"/>
    <property type="project" value="UniProtKB-UniRule"/>
</dbReference>
<dbReference type="FunFam" id="3.30.160.20:FF:000001">
    <property type="entry name" value="30S ribosomal protein S5"/>
    <property type="match status" value="1"/>
</dbReference>
<dbReference type="FunFam" id="3.30.230.10:FF:000002">
    <property type="entry name" value="30S ribosomal protein S5"/>
    <property type="match status" value="1"/>
</dbReference>
<dbReference type="Gene3D" id="3.30.160.20">
    <property type="match status" value="1"/>
</dbReference>
<dbReference type="Gene3D" id="3.30.230.10">
    <property type="match status" value="1"/>
</dbReference>
<dbReference type="HAMAP" id="MF_01307_B">
    <property type="entry name" value="Ribosomal_uS5_B"/>
    <property type="match status" value="1"/>
</dbReference>
<dbReference type="InterPro" id="IPR020568">
    <property type="entry name" value="Ribosomal_Su5_D2-typ_SF"/>
</dbReference>
<dbReference type="InterPro" id="IPR000851">
    <property type="entry name" value="Ribosomal_uS5"/>
</dbReference>
<dbReference type="InterPro" id="IPR005712">
    <property type="entry name" value="Ribosomal_uS5_bac-type"/>
</dbReference>
<dbReference type="InterPro" id="IPR005324">
    <property type="entry name" value="Ribosomal_uS5_C"/>
</dbReference>
<dbReference type="InterPro" id="IPR013810">
    <property type="entry name" value="Ribosomal_uS5_N"/>
</dbReference>
<dbReference type="InterPro" id="IPR018192">
    <property type="entry name" value="Ribosomal_uS5_N_CS"/>
</dbReference>
<dbReference type="InterPro" id="IPR014721">
    <property type="entry name" value="Ribsml_uS5_D2-typ_fold_subgr"/>
</dbReference>
<dbReference type="NCBIfam" id="TIGR01021">
    <property type="entry name" value="rpsE_bact"/>
    <property type="match status" value="1"/>
</dbReference>
<dbReference type="PANTHER" id="PTHR48277">
    <property type="entry name" value="MITOCHONDRIAL RIBOSOMAL PROTEIN S5"/>
    <property type="match status" value="1"/>
</dbReference>
<dbReference type="PANTHER" id="PTHR48277:SF1">
    <property type="entry name" value="MITOCHONDRIAL RIBOSOMAL PROTEIN S5"/>
    <property type="match status" value="1"/>
</dbReference>
<dbReference type="Pfam" id="PF00333">
    <property type="entry name" value="Ribosomal_S5"/>
    <property type="match status" value="1"/>
</dbReference>
<dbReference type="Pfam" id="PF03719">
    <property type="entry name" value="Ribosomal_S5_C"/>
    <property type="match status" value="1"/>
</dbReference>
<dbReference type="SUPFAM" id="SSF54768">
    <property type="entry name" value="dsRNA-binding domain-like"/>
    <property type="match status" value="1"/>
</dbReference>
<dbReference type="SUPFAM" id="SSF54211">
    <property type="entry name" value="Ribosomal protein S5 domain 2-like"/>
    <property type="match status" value="1"/>
</dbReference>
<dbReference type="PROSITE" id="PS00585">
    <property type="entry name" value="RIBOSOMAL_S5"/>
    <property type="match status" value="1"/>
</dbReference>
<dbReference type="PROSITE" id="PS50881">
    <property type="entry name" value="S5_DSRBD"/>
    <property type="match status" value="1"/>
</dbReference>
<sequence length="167" mass="17603">MAHIEKQAGELQEKLIAVNRVSKTVKGGRIFSFTALTVVGDGNGRVGFGYGKAREVPAAIQKAMEKARRNMINVALNNGTLQHPVKGVHTGSRVFMQPASEGTGIIAGGAMRAVLEVAGVHNVLAKAYGSTNPINVVRATIDGLENMNSPEMVAAKRGKSVEEILGK</sequence>
<proteinExistence type="inferred from homology"/>
<gene>
    <name evidence="1" type="primary">rpsE</name>
    <name type="ordered locus">ECP_3391</name>
</gene>
<keyword id="KW-0687">Ribonucleoprotein</keyword>
<keyword id="KW-0689">Ribosomal protein</keyword>
<keyword id="KW-0694">RNA-binding</keyword>
<keyword id="KW-0699">rRNA-binding</keyword>
<protein>
    <recommendedName>
        <fullName evidence="1">Small ribosomal subunit protein uS5</fullName>
    </recommendedName>
    <alternativeName>
        <fullName evidence="2">30S ribosomal protein S5</fullName>
    </alternativeName>
</protein>
<reference key="1">
    <citation type="journal article" date="2006" name="Mol. Microbiol.">
        <title>Role of pathogenicity island-associated integrases in the genome plasticity of uropathogenic Escherichia coli strain 536.</title>
        <authorList>
            <person name="Hochhut B."/>
            <person name="Wilde C."/>
            <person name="Balling G."/>
            <person name="Middendorf B."/>
            <person name="Dobrindt U."/>
            <person name="Brzuszkiewicz E."/>
            <person name="Gottschalk G."/>
            <person name="Carniel E."/>
            <person name="Hacker J."/>
        </authorList>
    </citation>
    <scope>NUCLEOTIDE SEQUENCE [LARGE SCALE GENOMIC DNA]</scope>
    <source>
        <strain>536 / UPEC</strain>
    </source>
</reference>